<sequence length="448" mass="49099">MLHRYLPMTEEDKQEMLKTIGVASIDDLFADIPEQVRFRGELKVKPAKSEPELWKELAALAEKNASVKQYVSFLGAGVYDHYIPAVVDHVLSRSEFYTAYTPYQPEISQGELQAIFEFQTMVCELTGMDVANSSMYDGGTALAEAVLLSAAHTKRKKVLISTAVHPQYREVVRTYAKGQKLEVKEIPYDGGITDLKALEAEMGDDVACVVVQYPNFFGQIEPLKAIAPLAHEKKSLFVVASNPLALGVLTPPGAFGADIVVGDMQPFGIPTQFGGPHCGYFAVKAPLMRKIPGRLVGQTTDEDGRRGFVLTLQAREQHIRRDKATSNICSNQALNALAASVALSALGKRGVKEMAAMNIQKAHYAKVELEKRGLSSPFAGPFFNEFVIRLGRPVSDVNDRLLEKGIIGGYDLGADYPELAGHMLVAVTELRTKEEIDRFVNELGDGHA</sequence>
<keyword id="KW-0560">Oxidoreductase</keyword>
<keyword id="KW-1185">Reference proteome</keyword>
<reference key="1">
    <citation type="journal article" date="2004" name="Nucleic Acids Res.">
        <title>Thermoadaptation trait revealed by the genome sequence of thermophilic Geobacillus kaustophilus.</title>
        <authorList>
            <person name="Takami H."/>
            <person name="Takaki Y."/>
            <person name="Chee G.-J."/>
            <person name="Nishi S."/>
            <person name="Shimamura S."/>
            <person name="Suzuki H."/>
            <person name="Matsui S."/>
            <person name="Uchiyama I."/>
        </authorList>
    </citation>
    <scope>NUCLEOTIDE SEQUENCE [LARGE SCALE GENOMIC DNA]</scope>
    <source>
        <strain>HTA426</strain>
    </source>
</reference>
<dbReference type="EC" id="1.4.4.2" evidence="1"/>
<dbReference type="EMBL" id="BA000043">
    <property type="protein sequence ID" value="BAD76709.1"/>
    <property type="molecule type" value="Genomic_DNA"/>
</dbReference>
<dbReference type="RefSeq" id="WP_011231906.1">
    <property type="nucleotide sequence ID" value="NC_006510.1"/>
</dbReference>
<dbReference type="SMR" id="Q5KX77"/>
<dbReference type="STRING" id="235909.GK2424"/>
<dbReference type="GeneID" id="32064310"/>
<dbReference type="KEGG" id="gka:GK2424"/>
<dbReference type="eggNOG" id="COG0403">
    <property type="taxonomic scope" value="Bacteria"/>
</dbReference>
<dbReference type="HOGENOM" id="CLU_004620_0_2_9"/>
<dbReference type="Proteomes" id="UP000001172">
    <property type="component" value="Chromosome"/>
</dbReference>
<dbReference type="GO" id="GO:0004375">
    <property type="term" value="F:glycine dehydrogenase (decarboxylating) activity"/>
    <property type="evidence" value="ECO:0007669"/>
    <property type="project" value="UniProtKB-EC"/>
</dbReference>
<dbReference type="GO" id="GO:0019464">
    <property type="term" value="P:glycine decarboxylation via glycine cleavage system"/>
    <property type="evidence" value="ECO:0007669"/>
    <property type="project" value="UniProtKB-UniRule"/>
</dbReference>
<dbReference type="GO" id="GO:0009116">
    <property type="term" value="P:nucleoside metabolic process"/>
    <property type="evidence" value="ECO:0007669"/>
    <property type="project" value="InterPro"/>
</dbReference>
<dbReference type="CDD" id="cd00613">
    <property type="entry name" value="GDC-P"/>
    <property type="match status" value="1"/>
</dbReference>
<dbReference type="FunFam" id="3.40.640.10:FF:000113">
    <property type="entry name" value="Probable glycine dehydrogenase (decarboxylating) subunit 1"/>
    <property type="match status" value="1"/>
</dbReference>
<dbReference type="Gene3D" id="3.90.1150.10">
    <property type="entry name" value="Aspartate Aminotransferase, domain 1"/>
    <property type="match status" value="1"/>
</dbReference>
<dbReference type="Gene3D" id="3.40.640.10">
    <property type="entry name" value="Type I PLP-dependent aspartate aminotransferase-like (Major domain)"/>
    <property type="match status" value="1"/>
</dbReference>
<dbReference type="HAMAP" id="MF_00712">
    <property type="entry name" value="GcvPA"/>
    <property type="match status" value="1"/>
</dbReference>
<dbReference type="InterPro" id="IPR023010">
    <property type="entry name" value="GcvPA"/>
</dbReference>
<dbReference type="InterPro" id="IPR049315">
    <property type="entry name" value="GDC-P_N"/>
</dbReference>
<dbReference type="InterPro" id="IPR020581">
    <property type="entry name" value="GDC_P"/>
</dbReference>
<dbReference type="InterPro" id="IPR015424">
    <property type="entry name" value="PyrdxlP-dep_Trfase"/>
</dbReference>
<dbReference type="InterPro" id="IPR015421">
    <property type="entry name" value="PyrdxlP-dep_Trfase_major"/>
</dbReference>
<dbReference type="InterPro" id="IPR015422">
    <property type="entry name" value="PyrdxlP-dep_Trfase_small"/>
</dbReference>
<dbReference type="NCBIfam" id="NF001696">
    <property type="entry name" value="PRK00451.1"/>
    <property type="match status" value="1"/>
</dbReference>
<dbReference type="PANTHER" id="PTHR42806">
    <property type="entry name" value="GLYCINE CLEAVAGE SYSTEM P-PROTEIN"/>
    <property type="match status" value="1"/>
</dbReference>
<dbReference type="PANTHER" id="PTHR42806:SF1">
    <property type="entry name" value="GLYCINE DEHYDROGENASE (DECARBOXYLATING)"/>
    <property type="match status" value="1"/>
</dbReference>
<dbReference type="Pfam" id="PF02347">
    <property type="entry name" value="GDC-P"/>
    <property type="match status" value="1"/>
</dbReference>
<dbReference type="PIRSF" id="PIRSF006815">
    <property type="entry name" value="GcvPA"/>
    <property type="match status" value="1"/>
</dbReference>
<dbReference type="SUPFAM" id="SSF53383">
    <property type="entry name" value="PLP-dependent transferases"/>
    <property type="match status" value="1"/>
</dbReference>
<protein>
    <recommendedName>
        <fullName evidence="1">Probable glycine dehydrogenase (decarboxylating) subunit 1</fullName>
        <ecNumber evidence="1">1.4.4.2</ecNumber>
    </recommendedName>
    <alternativeName>
        <fullName evidence="1">Glycine cleavage system P-protein subunit 1</fullName>
    </alternativeName>
    <alternativeName>
        <fullName evidence="1">Glycine decarboxylase subunit 1</fullName>
    </alternativeName>
    <alternativeName>
        <fullName evidence="1">Glycine dehydrogenase (aminomethyl-transferring) subunit 1</fullName>
    </alternativeName>
</protein>
<proteinExistence type="inferred from homology"/>
<name>GCSPA_GEOKA</name>
<accession>Q5KX77</accession>
<feature type="chain" id="PRO_1000045656" description="Probable glycine dehydrogenase (decarboxylating) subunit 1">
    <location>
        <begin position="1"/>
        <end position="448"/>
    </location>
</feature>
<comment type="function">
    <text evidence="1">The glycine cleavage system catalyzes the degradation of glycine. The P protein binds the alpha-amino group of glycine through its pyridoxal phosphate cofactor; CO(2) is released and the remaining methylamine moiety is then transferred to the lipoamide cofactor of the H protein.</text>
</comment>
<comment type="catalytic activity">
    <reaction evidence="1">
        <text>N(6)-[(R)-lipoyl]-L-lysyl-[glycine-cleavage complex H protein] + glycine + H(+) = N(6)-[(R)-S(8)-aminomethyldihydrolipoyl]-L-lysyl-[glycine-cleavage complex H protein] + CO2</text>
        <dbReference type="Rhea" id="RHEA:24304"/>
        <dbReference type="Rhea" id="RHEA-COMP:10494"/>
        <dbReference type="Rhea" id="RHEA-COMP:10495"/>
        <dbReference type="ChEBI" id="CHEBI:15378"/>
        <dbReference type="ChEBI" id="CHEBI:16526"/>
        <dbReference type="ChEBI" id="CHEBI:57305"/>
        <dbReference type="ChEBI" id="CHEBI:83099"/>
        <dbReference type="ChEBI" id="CHEBI:83143"/>
        <dbReference type="EC" id="1.4.4.2"/>
    </reaction>
</comment>
<comment type="subunit">
    <text evidence="1">The glycine cleavage system is composed of four proteins: P, T, L and H. In this organism, the P 'protein' is a heterodimer of two subunits.</text>
</comment>
<comment type="similarity">
    <text evidence="1">Belongs to the GcvP family. N-terminal subunit subfamily.</text>
</comment>
<organism>
    <name type="scientific">Geobacillus kaustophilus (strain HTA426)</name>
    <dbReference type="NCBI Taxonomy" id="235909"/>
    <lineage>
        <taxon>Bacteria</taxon>
        <taxon>Bacillati</taxon>
        <taxon>Bacillota</taxon>
        <taxon>Bacilli</taxon>
        <taxon>Bacillales</taxon>
        <taxon>Anoxybacillaceae</taxon>
        <taxon>Geobacillus</taxon>
        <taxon>Geobacillus thermoleovorans group</taxon>
    </lineage>
</organism>
<gene>
    <name evidence="1" type="primary">gcvPA</name>
    <name type="ordered locus">GK2424</name>
</gene>
<evidence type="ECO:0000255" key="1">
    <source>
        <dbReference type="HAMAP-Rule" id="MF_00712"/>
    </source>
</evidence>